<comment type="function">
    <text evidence="1">Catalyzes the first intracellular reaction of sulfate assimilation, forming adenosine-5'-phosphosulfate (APS) from inorganic sulfate and ATP. Plays an important role in sulfate activation as a component of the biosynthesis pathway of sulfur-containing amino acids.</text>
</comment>
<comment type="catalytic activity">
    <reaction evidence="1">
        <text>sulfate + ATP + H(+) = adenosine 5'-phosphosulfate + diphosphate</text>
        <dbReference type="Rhea" id="RHEA:18133"/>
        <dbReference type="ChEBI" id="CHEBI:15378"/>
        <dbReference type="ChEBI" id="CHEBI:16189"/>
        <dbReference type="ChEBI" id="CHEBI:30616"/>
        <dbReference type="ChEBI" id="CHEBI:33019"/>
        <dbReference type="ChEBI" id="CHEBI:58243"/>
        <dbReference type="EC" id="2.7.7.4"/>
    </reaction>
</comment>
<comment type="activity regulation">
    <text evidence="1">Allosterically inhibited by 3'-phosphoadenosine 5'-phosphosulfate (PAPS).</text>
</comment>
<comment type="pathway">
    <text evidence="1">Sulfur metabolism; hydrogen sulfide biosynthesis; sulfite from sulfate: step 1/3.</text>
</comment>
<comment type="subunit">
    <text evidence="1">Homohexamer. Dimer of trimers.</text>
</comment>
<comment type="subcellular location">
    <subcellularLocation>
        <location evidence="1">Cytoplasm</location>
    </subcellularLocation>
</comment>
<comment type="domain">
    <text evidence="1">The adenylyl-sulfate kinase (APS kinase) is non-functional. It is involved in allosteric regulation by PAPS. PAPS binding induces a large rotational rearrangement of domains lowering the substrate affinity of the enzyme.</text>
</comment>
<comment type="similarity">
    <text evidence="1">In the N-terminal section; belongs to the sulfate adenylyltransferase family.</text>
</comment>
<comment type="similarity">
    <text evidence="1">In the C-terminal section; belongs to the APS kinase family.</text>
</comment>
<reference key="1">
    <citation type="submission" date="2002-07" db="EMBL/GenBank/DDBJ databases">
        <title>ATP sulphurylase encoding gene sCO from Aspergillus oryzae.</title>
        <authorList>
            <person name="Yamashita N."/>
        </authorList>
    </citation>
    <scope>NUCLEOTIDE SEQUENCE [GENOMIC DNA]</scope>
</reference>
<reference key="2">
    <citation type="submission" date="2002-01" db="EMBL/GenBank/DDBJ databases">
        <title>Aspergillus oryzae genome sequence.</title>
        <authorList>
            <person name="Obata H."/>
            <person name="Hata Y."/>
            <person name="Kawato A."/>
        </authorList>
    </citation>
    <scope>NUCLEOTIDE SEQUENCE [GENOMIC DNA]</scope>
</reference>
<reference key="3">
    <citation type="journal article" date="2005" name="Nature">
        <title>Genome sequencing and analysis of Aspergillus oryzae.</title>
        <authorList>
            <person name="Machida M."/>
            <person name="Asai K."/>
            <person name="Sano M."/>
            <person name="Tanaka T."/>
            <person name="Kumagai T."/>
            <person name="Terai G."/>
            <person name="Kusumoto K."/>
            <person name="Arima T."/>
            <person name="Akita O."/>
            <person name="Kashiwagi Y."/>
            <person name="Abe K."/>
            <person name="Gomi K."/>
            <person name="Horiuchi H."/>
            <person name="Kitamoto K."/>
            <person name="Kobayashi T."/>
            <person name="Takeuchi M."/>
            <person name="Denning D.W."/>
            <person name="Galagan J.E."/>
            <person name="Nierman W.C."/>
            <person name="Yu J."/>
            <person name="Archer D.B."/>
            <person name="Bennett J.W."/>
            <person name="Bhatnagar D."/>
            <person name="Cleveland T.E."/>
            <person name="Fedorova N.D."/>
            <person name="Gotoh O."/>
            <person name="Horikawa H."/>
            <person name="Hosoyama A."/>
            <person name="Ichinomiya M."/>
            <person name="Igarashi R."/>
            <person name="Iwashita K."/>
            <person name="Juvvadi P.R."/>
            <person name="Kato M."/>
            <person name="Kato Y."/>
            <person name="Kin T."/>
            <person name="Kokubun A."/>
            <person name="Maeda H."/>
            <person name="Maeyama N."/>
            <person name="Maruyama J."/>
            <person name="Nagasaki H."/>
            <person name="Nakajima T."/>
            <person name="Oda K."/>
            <person name="Okada K."/>
            <person name="Paulsen I."/>
            <person name="Sakamoto K."/>
            <person name="Sawano T."/>
            <person name="Takahashi M."/>
            <person name="Takase K."/>
            <person name="Terabayashi Y."/>
            <person name="Wortman J.R."/>
            <person name="Yamada O."/>
            <person name="Yamagata Y."/>
            <person name="Anazawa H."/>
            <person name="Hata Y."/>
            <person name="Koide Y."/>
            <person name="Komori T."/>
            <person name="Koyama Y."/>
            <person name="Minetoki T."/>
            <person name="Suharnan S."/>
            <person name="Tanaka A."/>
            <person name="Isono K."/>
            <person name="Kuhara S."/>
            <person name="Ogasawara N."/>
            <person name="Kikuchi H."/>
        </authorList>
    </citation>
    <scope>NUCLEOTIDE SEQUENCE [LARGE SCALE GENOMIC DNA]</scope>
    <source>
        <strain>ATCC 42149 / RIB 40</strain>
    </source>
</reference>
<dbReference type="EC" id="2.7.7.4" evidence="1"/>
<dbReference type="EMBL" id="AB088634">
    <property type="protein sequence ID" value="BAC06330.1"/>
    <property type="molecule type" value="Genomic_DNA"/>
</dbReference>
<dbReference type="EMBL" id="AB078786">
    <property type="protein sequence ID" value="BAC55904.1"/>
    <property type="molecule type" value="Genomic_DNA"/>
</dbReference>
<dbReference type="EMBL" id="BA000054">
    <property type="protein sequence ID" value="BAE63547.1"/>
    <property type="molecule type" value="Genomic_DNA"/>
</dbReference>
<dbReference type="RefSeq" id="XP_001824680.1">
    <property type="nucleotide sequence ID" value="XM_001824628.1"/>
</dbReference>
<dbReference type="SMR" id="Q8NK83"/>
<dbReference type="STRING" id="510516.Q8NK83"/>
<dbReference type="EnsemblFungi" id="BAE63547">
    <property type="protein sequence ID" value="BAE63547"/>
    <property type="gene ID" value="AO090020000349"/>
</dbReference>
<dbReference type="GeneID" id="5996766"/>
<dbReference type="KEGG" id="aor:AO090020000349"/>
<dbReference type="VEuPathDB" id="FungiDB:AO090020000349"/>
<dbReference type="HOGENOM" id="CLU_022950_0_0_1"/>
<dbReference type="OMA" id="MEMRYAG"/>
<dbReference type="OrthoDB" id="52372at5052"/>
<dbReference type="UniPathway" id="UPA00140">
    <property type="reaction ID" value="UER00204"/>
</dbReference>
<dbReference type="Proteomes" id="UP000006564">
    <property type="component" value="Chromosome 6"/>
</dbReference>
<dbReference type="GO" id="GO:0005737">
    <property type="term" value="C:cytoplasm"/>
    <property type="evidence" value="ECO:0007669"/>
    <property type="project" value="UniProtKB-SubCell"/>
</dbReference>
<dbReference type="GO" id="GO:0004020">
    <property type="term" value="F:adenylylsulfate kinase activity"/>
    <property type="evidence" value="ECO:0007669"/>
    <property type="project" value="InterPro"/>
</dbReference>
<dbReference type="GO" id="GO:0005524">
    <property type="term" value="F:ATP binding"/>
    <property type="evidence" value="ECO:0007669"/>
    <property type="project" value="UniProtKB-KW"/>
</dbReference>
<dbReference type="GO" id="GO:0004781">
    <property type="term" value="F:sulfate adenylyltransferase (ATP) activity"/>
    <property type="evidence" value="ECO:0007669"/>
    <property type="project" value="UniProtKB-UniRule"/>
</dbReference>
<dbReference type="GO" id="GO:0019344">
    <property type="term" value="P:cysteine biosynthetic process"/>
    <property type="evidence" value="ECO:0007669"/>
    <property type="project" value="UniProtKB-KW"/>
</dbReference>
<dbReference type="GO" id="GO:0070814">
    <property type="term" value="P:hydrogen sulfide biosynthetic process"/>
    <property type="evidence" value="ECO:0007669"/>
    <property type="project" value="UniProtKB-UniRule"/>
</dbReference>
<dbReference type="GO" id="GO:0009086">
    <property type="term" value="P:methionine biosynthetic process"/>
    <property type="evidence" value="ECO:0007669"/>
    <property type="project" value="UniProtKB-KW"/>
</dbReference>
<dbReference type="GO" id="GO:0010134">
    <property type="term" value="P:sulfate assimilation via adenylyl sulfate reduction"/>
    <property type="evidence" value="ECO:0007669"/>
    <property type="project" value="TreeGrafter"/>
</dbReference>
<dbReference type="GO" id="GO:0019379">
    <property type="term" value="P:sulfate assimilation, phosphoadenylyl sulfate reduction by phosphoadenylyl-sulfate reductase (thioredoxin)"/>
    <property type="evidence" value="ECO:0007669"/>
    <property type="project" value="TreeGrafter"/>
</dbReference>
<dbReference type="CDD" id="cd02027">
    <property type="entry name" value="APSK"/>
    <property type="match status" value="1"/>
</dbReference>
<dbReference type="CDD" id="cd00517">
    <property type="entry name" value="ATPS"/>
    <property type="match status" value="1"/>
</dbReference>
<dbReference type="FunFam" id="3.10.400.10:FF:000003">
    <property type="entry name" value="Sulfate adenylyltransferase"/>
    <property type="match status" value="1"/>
</dbReference>
<dbReference type="FunFam" id="3.40.50.300:FF:000802">
    <property type="entry name" value="Sulfate adenylyltransferase"/>
    <property type="match status" value="1"/>
</dbReference>
<dbReference type="FunFam" id="3.40.50.620:FF:000052">
    <property type="entry name" value="Sulfate adenylyltransferase"/>
    <property type="match status" value="1"/>
</dbReference>
<dbReference type="Gene3D" id="3.40.50.620">
    <property type="entry name" value="HUPs"/>
    <property type="match status" value="1"/>
</dbReference>
<dbReference type="Gene3D" id="3.40.50.300">
    <property type="entry name" value="P-loop containing nucleotide triphosphate hydrolases"/>
    <property type="match status" value="1"/>
</dbReference>
<dbReference type="Gene3D" id="3.10.400.10">
    <property type="entry name" value="Sulfate adenylyltransferase"/>
    <property type="match status" value="1"/>
</dbReference>
<dbReference type="HAMAP" id="MF_03106">
    <property type="entry name" value="Sulf_adenylyltr_euk"/>
    <property type="match status" value="1"/>
</dbReference>
<dbReference type="InterPro" id="IPR002891">
    <property type="entry name" value="APS_kinase"/>
</dbReference>
<dbReference type="InterPro" id="IPR025980">
    <property type="entry name" value="ATP-Sase_PUA-like_dom"/>
</dbReference>
<dbReference type="InterPro" id="IPR027417">
    <property type="entry name" value="P-loop_NTPase"/>
</dbReference>
<dbReference type="InterPro" id="IPR015947">
    <property type="entry name" value="PUA-like_sf"/>
</dbReference>
<dbReference type="InterPro" id="IPR014729">
    <property type="entry name" value="Rossmann-like_a/b/a_fold"/>
</dbReference>
<dbReference type="InterPro" id="IPR027535">
    <property type="entry name" value="Sulf_adenylyltr_euk"/>
</dbReference>
<dbReference type="InterPro" id="IPR050512">
    <property type="entry name" value="Sulf_AdTrans/APS_kinase"/>
</dbReference>
<dbReference type="InterPro" id="IPR024951">
    <property type="entry name" value="Sulfurylase_cat_dom"/>
</dbReference>
<dbReference type="InterPro" id="IPR002650">
    <property type="entry name" value="Sulphate_adenylyltransferase"/>
</dbReference>
<dbReference type="NCBIfam" id="TIGR00455">
    <property type="entry name" value="apsK"/>
    <property type="match status" value="1"/>
</dbReference>
<dbReference type="NCBIfam" id="NF004040">
    <property type="entry name" value="PRK05537.1"/>
    <property type="match status" value="1"/>
</dbReference>
<dbReference type="NCBIfam" id="TIGR00339">
    <property type="entry name" value="sopT"/>
    <property type="match status" value="1"/>
</dbReference>
<dbReference type="PANTHER" id="PTHR42700">
    <property type="entry name" value="SULFATE ADENYLYLTRANSFERASE"/>
    <property type="match status" value="1"/>
</dbReference>
<dbReference type="PANTHER" id="PTHR42700:SF1">
    <property type="entry name" value="SULFATE ADENYLYLTRANSFERASE"/>
    <property type="match status" value="1"/>
</dbReference>
<dbReference type="Pfam" id="PF01583">
    <property type="entry name" value="APS_kinase"/>
    <property type="match status" value="1"/>
</dbReference>
<dbReference type="Pfam" id="PF01747">
    <property type="entry name" value="ATP-sulfurylase"/>
    <property type="match status" value="1"/>
</dbReference>
<dbReference type="Pfam" id="PF14306">
    <property type="entry name" value="PUA_2"/>
    <property type="match status" value="1"/>
</dbReference>
<dbReference type="SUPFAM" id="SSF52374">
    <property type="entry name" value="Nucleotidylyl transferase"/>
    <property type="match status" value="1"/>
</dbReference>
<dbReference type="SUPFAM" id="SSF52540">
    <property type="entry name" value="P-loop containing nucleoside triphosphate hydrolases"/>
    <property type="match status" value="1"/>
</dbReference>
<dbReference type="SUPFAM" id="SSF88697">
    <property type="entry name" value="PUA domain-like"/>
    <property type="match status" value="1"/>
</dbReference>
<sequence length="573" mass="63894">MANSPHGGVLKDLLARDAPRHDQLAAEAESLPAIVLSERQLCDLELIMNGGFSPLEGFMNQKDFDGVCENCRLADGNLFSMPITLDASQQVINELKLQAGSRVTLRDFRDDRNLAILTIDDIYRADKEKEAKLVFGGDPEHPAIKYLNTKVEEFYIGGKIEAVNKLNHYDYVALRYTPAELRIHFDKLGWSRVVAFQTRNPMHRAHRELTVRAARARAANVLIHPVVGLTKPGDIDHFTRVRAYQALLPRYPNGMAVLGLLGLAMRMGGPREAIWHAIIRKNHGATHFIVGRDHAGPGKNSKGEEFYGPYDAQHAVEKYKDELGIEVVEFQQVTYLPDTDEYKPKDEVPAGVKTLDISGTELRNRLRTGAHIPEWFSYPEVVKILRESSPPRHTQGFTVFLTGYQNSGKDAIARALQVTLNQQGGRAVSLLLGDTVRHELSSELGFSREDRHTNIQRIAFVASELTKAGAAVIAAPIAPYEHSRKAAREAVSQHGSFFLVHVNTPLEYCEKTDKRGIYAKARAGEIKGFTGVDDPYEAPENAHLTVDVSKQSVRSIVHEIILLLETEGFFDRA</sequence>
<feature type="chain" id="PRO_0000283679" description="Sulfate adenylyltransferase">
    <location>
        <begin position="1"/>
        <end position="573"/>
    </location>
</feature>
<feature type="region of interest" description="N-terminal" evidence="1">
    <location>
        <begin position="1"/>
        <end position="169"/>
    </location>
</feature>
<feature type="region of interest" description="Catalytic" evidence="1">
    <location>
        <begin position="170"/>
        <end position="394"/>
    </location>
</feature>
<feature type="region of interest" description="Allosteric regulation domain; adenylyl-sulfate kinase-like" evidence="1">
    <location>
        <begin position="395"/>
        <end position="573"/>
    </location>
</feature>
<feature type="active site" evidence="1">
    <location>
        <position position="198"/>
    </location>
</feature>
<feature type="active site" evidence="1">
    <location>
        <position position="199"/>
    </location>
</feature>
<feature type="active site" evidence="1">
    <location>
        <position position="200"/>
    </location>
</feature>
<feature type="binding site" evidence="1">
    <location>
        <begin position="197"/>
        <end position="200"/>
    </location>
    <ligand>
        <name>ATP</name>
        <dbReference type="ChEBI" id="CHEBI:30616"/>
    </ligand>
</feature>
<feature type="binding site" evidence="1">
    <location>
        <position position="197"/>
    </location>
    <ligand>
        <name>sulfate</name>
        <dbReference type="ChEBI" id="CHEBI:16189"/>
    </ligand>
</feature>
<feature type="binding site" evidence="1">
    <location>
        <position position="199"/>
    </location>
    <ligand>
        <name>sulfate</name>
        <dbReference type="ChEBI" id="CHEBI:16189"/>
    </ligand>
</feature>
<feature type="binding site" evidence="1">
    <location>
        <begin position="291"/>
        <end position="294"/>
    </location>
    <ligand>
        <name>ATP</name>
        <dbReference type="ChEBI" id="CHEBI:30616"/>
    </ligand>
</feature>
<feature type="binding site" evidence="1">
    <location>
        <position position="295"/>
    </location>
    <ligand>
        <name>sulfate</name>
        <dbReference type="ChEBI" id="CHEBI:16189"/>
    </ligand>
</feature>
<feature type="binding site" evidence="1">
    <location>
        <position position="333"/>
    </location>
    <ligand>
        <name>ATP</name>
        <dbReference type="ChEBI" id="CHEBI:30616"/>
    </ligand>
</feature>
<feature type="binding site" evidence="1">
    <location>
        <begin position="434"/>
        <end position="437"/>
    </location>
    <ligand>
        <name>3'-phosphoadenylyl sulfate</name>
        <dbReference type="ChEBI" id="CHEBI:58339"/>
        <note>allosteric inhibitor</note>
    </ligand>
</feature>
<feature type="binding site" evidence="1">
    <location>
        <position position="451"/>
    </location>
    <ligand>
        <name>3'-phosphoadenylyl sulfate</name>
        <dbReference type="ChEBI" id="CHEBI:58339"/>
        <note>allosteric inhibitor</note>
    </ligand>
</feature>
<feature type="binding site" evidence="1">
    <location>
        <begin position="477"/>
        <end position="478"/>
    </location>
    <ligand>
        <name>3'-phosphoadenylyl sulfate</name>
        <dbReference type="ChEBI" id="CHEBI:58339"/>
        <note>allosteric inhibitor</note>
    </ligand>
</feature>
<feature type="binding site" evidence="1">
    <location>
        <position position="515"/>
    </location>
    <ligand>
        <name>3'-phosphoadenylyl sulfate</name>
        <dbReference type="ChEBI" id="CHEBI:58339"/>
        <note>allosteric inhibitor</note>
    </ligand>
</feature>
<feature type="site" description="Transition state stabilizer" evidence="1">
    <location>
        <position position="203"/>
    </location>
</feature>
<feature type="site" description="Transition state stabilizer" evidence="1">
    <location>
        <position position="206"/>
    </location>
</feature>
<feature type="site" description="Induces change in substrate recognition on ATP binding" evidence="1">
    <location>
        <position position="330"/>
    </location>
</feature>
<accession>Q8NK83</accession>
<proteinExistence type="inferred from homology"/>
<protein>
    <recommendedName>
        <fullName evidence="1">Sulfate adenylyltransferase</fullName>
        <ecNumber evidence="1">2.7.7.4</ecNumber>
    </recommendedName>
    <alternativeName>
        <fullName evidence="1">ATP-sulfurylase</fullName>
    </alternativeName>
    <alternativeName>
        <fullName evidence="1">Sulfate adenylate transferase</fullName>
        <shortName evidence="1">SAT</shortName>
    </alternativeName>
</protein>
<evidence type="ECO:0000255" key="1">
    <source>
        <dbReference type="HAMAP-Rule" id="MF_03106"/>
    </source>
</evidence>
<name>MET3_ASPOR</name>
<gene>
    <name evidence="1" type="primary">met3</name>
    <name type="synonym">AosC</name>
    <name type="synonym">sC</name>
    <name type="synonym">sCO</name>
    <name type="ORF">AO090020000349</name>
</gene>
<organism>
    <name type="scientific">Aspergillus oryzae (strain ATCC 42149 / RIB 40)</name>
    <name type="common">Yellow koji mold</name>
    <dbReference type="NCBI Taxonomy" id="510516"/>
    <lineage>
        <taxon>Eukaryota</taxon>
        <taxon>Fungi</taxon>
        <taxon>Dikarya</taxon>
        <taxon>Ascomycota</taxon>
        <taxon>Pezizomycotina</taxon>
        <taxon>Eurotiomycetes</taxon>
        <taxon>Eurotiomycetidae</taxon>
        <taxon>Eurotiales</taxon>
        <taxon>Aspergillaceae</taxon>
        <taxon>Aspergillus</taxon>
        <taxon>Aspergillus subgen. Circumdati</taxon>
    </lineage>
</organism>
<keyword id="KW-0021">Allosteric enzyme</keyword>
<keyword id="KW-0028">Amino-acid biosynthesis</keyword>
<keyword id="KW-0067">ATP-binding</keyword>
<keyword id="KW-0198">Cysteine biosynthesis</keyword>
<keyword id="KW-0963">Cytoplasm</keyword>
<keyword id="KW-0486">Methionine biosynthesis</keyword>
<keyword id="KW-0547">Nucleotide-binding</keyword>
<keyword id="KW-0548">Nucleotidyltransferase</keyword>
<keyword id="KW-1185">Reference proteome</keyword>
<keyword id="KW-0808">Transferase</keyword>